<gene>
    <name type="primary">LPE10</name>
    <name type="ordered locus">KLLA0F28017g</name>
</gene>
<feature type="transit peptide" description="Mitochondrion" evidence="2">
    <location>
        <begin position="1"/>
        <end position="48"/>
    </location>
</feature>
<feature type="chain" id="PRO_0000043238" description="Mitochondrial inner membrane magnesium transporter LPE10">
    <location>
        <begin position="49"/>
        <end position="397"/>
    </location>
</feature>
<feature type="transmembrane region" description="Helical" evidence="2">
    <location>
        <begin position="318"/>
        <end position="338"/>
    </location>
</feature>
<feature type="transmembrane region" description="Helical" evidence="2">
    <location>
        <begin position="355"/>
        <end position="375"/>
    </location>
</feature>
<feature type="short sequence motif" description="YGMN">
    <location>
        <begin position="342"/>
        <end position="345"/>
    </location>
</feature>
<protein>
    <recommendedName>
        <fullName>Mitochondrial inner membrane magnesium transporter LPE10</fullName>
    </recommendedName>
</protein>
<keyword id="KW-0406">Ion transport</keyword>
<keyword id="KW-0460">Magnesium</keyword>
<keyword id="KW-0472">Membrane</keyword>
<keyword id="KW-0496">Mitochondrion</keyword>
<keyword id="KW-0999">Mitochondrion inner membrane</keyword>
<keyword id="KW-1185">Reference proteome</keyword>
<keyword id="KW-0809">Transit peptide</keyword>
<keyword id="KW-0812">Transmembrane</keyword>
<keyword id="KW-1133">Transmembrane helix</keyword>
<keyword id="KW-0813">Transport</keyword>
<organism>
    <name type="scientific">Kluyveromyces lactis (strain ATCC 8585 / CBS 2359 / DSM 70799 / NBRC 1267 / NRRL Y-1140 / WM37)</name>
    <name type="common">Yeast</name>
    <name type="synonym">Candida sphaerica</name>
    <dbReference type="NCBI Taxonomy" id="284590"/>
    <lineage>
        <taxon>Eukaryota</taxon>
        <taxon>Fungi</taxon>
        <taxon>Dikarya</taxon>
        <taxon>Ascomycota</taxon>
        <taxon>Saccharomycotina</taxon>
        <taxon>Saccharomycetes</taxon>
        <taxon>Saccharomycetales</taxon>
        <taxon>Saccharomycetaceae</taxon>
        <taxon>Kluyveromyces</taxon>
    </lineage>
</organism>
<reference key="1">
    <citation type="journal article" date="2004" name="Nature">
        <title>Genome evolution in yeasts.</title>
        <authorList>
            <person name="Dujon B."/>
            <person name="Sherman D."/>
            <person name="Fischer G."/>
            <person name="Durrens P."/>
            <person name="Casaregola S."/>
            <person name="Lafontaine I."/>
            <person name="de Montigny J."/>
            <person name="Marck C."/>
            <person name="Neuveglise C."/>
            <person name="Talla E."/>
            <person name="Goffard N."/>
            <person name="Frangeul L."/>
            <person name="Aigle M."/>
            <person name="Anthouard V."/>
            <person name="Babour A."/>
            <person name="Barbe V."/>
            <person name="Barnay S."/>
            <person name="Blanchin S."/>
            <person name="Beckerich J.-M."/>
            <person name="Beyne E."/>
            <person name="Bleykasten C."/>
            <person name="Boisrame A."/>
            <person name="Boyer J."/>
            <person name="Cattolico L."/>
            <person name="Confanioleri F."/>
            <person name="de Daruvar A."/>
            <person name="Despons L."/>
            <person name="Fabre E."/>
            <person name="Fairhead C."/>
            <person name="Ferry-Dumazet H."/>
            <person name="Groppi A."/>
            <person name="Hantraye F."/>
            <person name="Hennequin C."/>
            <person name="Jauniaux N."/>
            <person name="Joyet P."/>
            <person name="Kachouri R."/>
            <person name="Kerrest A."/>
            <person name="Koszul R."/>
            <person name="Lemaire M."/>
            <person name="Lesur I."/>
            <person name="Ma L."/>
            <person name="Muller H."/>
            <person name="Nicaud J.-M."/>
            <person name="Nikolski M."/>
            <person name="Oztas S."/>
            <person name="Ozier-Kalogeropoulos O."/>
            <person name="Pellenz S."/>
            <person name="Potier S."/>
            <person name="Richard G.-F."/>
            <person name="Straub M.-L."/>
            <person name="Suleau A."/>
            <person name="Swennen D."/>
            <person name="Tekaia F."/>
            <person name="Wesolowski-Louvel M."/>
            <person name="Westhof E."/>
            <person name="Wirth B."/>
            <person name="Zeniou-Meyer M."/>
            <person name="Zivanovic Y."/>
            <person name="Bolotin-Fukuhara M."/>
            <person name="Thierry A."/>
            <person name="Bouchier C."/>
            <person name="Caudron B."/>
            <person name="Scarpelli C."/>
            <person name="Gaillardin C."/>
            <person name="Weissenbach J."/>
            <person name="Wincker P."/>
            <person name="Souciet J.-L."/>
        </authorList>
    </citation>
    <scope>NUCLEOTIDE SEQUENCE [LARGE SCALE GENOMIC DNA]</scope>
    <source>
        <strain>ATCC 8585 / CBS 2359 / DSM 70799 / NBRC 1267 / NRRL Y-1140 / WM37</strain>
    </source>
</reference>
<accession>Q6CIB3</accession>
<comment type="function">
    <text evidence="1">Mitochondrial inner membrane magnesium transporter required for mitochondrial magnesium homeostasis. Modulates the conductance of the MRS2 channel. Involved in the splicing of mRNA group II introns in mitochondria by affecting mitochondrial magnesium concentrations, which are critical for group II intron splicing.</text>
</comment>
<comment type="subunit">
    <text evidence="1">Forms homooligomers. Interacts with MRS2.</text>
</comment>
<comment type="subcellular location">
    <subcellularLocation>
        <location evidence="1">Mitochondrion inner membrane</location>
        <topology evidence="1">Multi-pass membrane protein</topology>
    </subcellularLocation>
</comment>
<comment type="similarity">
    <text evidence="3">Belongs to the CorA metal ion transporter (MIT) (TC 1.A.35) family.</text>
</comment>
<dbReference type="EMBL" id="CR382126">
    <property type="protein sequence ID" value="CAG99034.1"/>
    <property type="molecule type" value="Genomic_DNA"/>
</dbReference>
<dbReference type="RefSeq" id="XP_456326.1">
    <property type="nucleotide sequence ID" value="XM_456326.1"/>
</dbReference>
<dbReference type="SMR" id="Q6CIB3"/>
<dbReference type="FunCoup" id="Q6CIB3">
    <property type="interactions" value="349"/>
</dbReference>
<dbReference type="PaxDb" id="284590-Q6CIB3"/>
<dbReference type="KEGG" id="kla:KLLA0_F28017g"/>
<dbReference type="eggNOG" id="KOG2662">
    <property type="taxonomic scope" value="Eukaryota"/>
</dbReference>
<dbReference type="HOGENOM" id="CLU_025144_1_0_1"/>
<dbReference type="InParanoid" id="Q6CIB3"/>
<dbReference type="OMA" id="TRNNCII"/>
<dbReference type="Proteomes" id="UP000000598">
    <property type="component" value="Chromosome F"/>
</dbReference>
<dbReference type="GO" id="GO:0005743">
    <property type="term" value="C:mitochondrial inner membrane"/>
    <property type="evidence" value="ECO:0007669"/>
    <property type="project" value="UniProtKB-SubCell"/>
</dbReference>
<dbReference type="GO" id="GO:0015095">
    <property type="term" value="F:magnesium ion transmembrane transporter activity"/>
    <property type="evidence" value="ECO:0007669"/>
    <property type="project" value="TreeGrafter"/>
</dbReference>
<dbReference type="GO" id="GO:0045016">
    <property type="term" value="P:mitochondrial magnesium ion transmembrane transport"/>
    <property type="evidence" value="ECO:0007669"/>
    <property type="project" value="TreeGrafter"/>
</dbReference>
<dbReference type="CDD" id="cd12823">
    <property type="entry name" value="Mrs2_Mfm1p-like"/>
    <property type="match status" value="1"/>
</dbReference>
<dbReference type="FunFam" id="1.20.58.340:FF:000005">
    <property type="entry name" value="Inner membrane magnesium transporter MRS2"/>
    <property type="match status" value="1"/>
</dbReference>
<dbReference type="FunFam" id="2.40.128.330:FF:000002">
    <property type="entry name" value="Inner membrane magnesium transporter mrs2"/>
    <property type="match status" value="1"/>
</dbReference>
<dbReference type="Gene3D" id="2.40.128.330">
    <property type="match status" value="1"/>
</dbReference>
<dbReference type="Gene3D" id="1.20.58.340">
    <property type="entry name" value="Magnesium transport protein CorA, transmembrane region"/>
    <property type="match status" value="1"/>
</dbReference>
<dbReference type="InterPro" id="IPR039204">
    <property type="entry name" value="MRS2-like"/>
</dbReference>
<dbReference type="PANTHER" id="PTHR13890:SF0">
    <property type="entry name" value="MAGNESIUM TRANSPORTER MRS2 HOMOLOG, MITOCHONDRIAL"/>
    <property type="match status" value="1"/>
</dbReference>
<dbReference type="PANTHER" id="PTHR13890">
    <property type="entry name" value="RNA SPLICING PROTEIN MRS2, MITOCHONDRIAL"/>
    <property type="match status" value="1"/>
</dbReference>
<dbReference type="Pfam" id="PF22099">
    <property type="entry name" value="MRS2-like"/>
    <property type="match status" value="1"/>
</dbReference>
<sequence length="397" mass="45452">MLFIRQLSVIPKAPAFAKFFHTAGLVRQKLSDPNHLAILLQKNLAQRNSSLYNPELETIRCTIFDRHGNMQKPSIDLRRDELIHTHGLLPRDLRKVEKSRRNDLVPSVLVRENSILVSILNIRALVKSDMLILFDSMGIKLDSVSQQNFIADLQLRLQNRSGFEVPDVVNKDPLPYEFRAVESIFISAISNLNAELKVHLNVSTGILQDLEYSITRDKLRYLLIQNKKLSVFHKKSFLMREMIEELLEQDDVLCEMYLTEKQLGKPREEHDHAEIEMLLETYYNHVDEIVQTVGNTMSNIKTTEEIINIILDSNRNQLMLLGLRFSIGLLSLAGSIFIASIYGMNLENFIEEGNVGFPVVSTLGVILMAYLFAFSVKHLHKLEKVQLMSHGKSSTLK</sequence>
<name>LPE10_KLULA</name>
<evidence type="ECO:0000250" key="1">
    <source>
        <dbReference type="UniProtKB" id="Q02783"/>
    </source>
</evidence>
<evidence type="ECO:0000255" key="2"/>
<evidence type="ECO:0000305" key="3"/>
<proteinExistence type="inferred from homology"/>